<dbReference type="EC" id="2.7.1.107" evidence="6"/>
<dbReference type="EMBL" id="U59429">
    <property type="protein sequence ID" value="AAC52714.1"/>
    <property type="molecule type" value="mRNA"/>
</dbReference>
<dbReference type="SMR" id="Q64398"/>
<dbReference type="STRING" id="10036.ENSMAUP00000019090"/>
<dbReference type="eggNOG" id="KOG1170">
    <property type="taxonomic scope" value="Eukaryota"/>
</dbReference>
<dbReference type="BRENDA" id="2.7.1.107">
    <property type="organism ID" value="3239"/>
</dbReference>
<dbReference type="UniPathway" id="UPA00230"/>
<dbReference type="Proteomes" id="UP000189706">
    <property type="component" value="Unplaced"/>
</dbReference>
<dbReference type="GO" id="GO:0015629">
    <property type="term" value="C:actin cytoskeleton"/>
    <property type="evidence" value="ECO:0000250"/>
    <property type="project" value="UniProtKB"/>
</dbReference>
<dbReference type="GO" id="GO:0005737">
    <property type="term" value="C:cytoplasm"/>
    <property type="evidence" value="ECO:0000250"/>
    <property type="project" value="UniProtKB"/>
</dbReference>
<dbReference type="GO" id="GO:0005886">
    <property type="term" value="C:plasma membrane"/>
    <property type="evidence" value="ECO:0000250"/>
    <property type="project" value="UniProtKB"/>
</dbReference>
<dbReference type="GO" id="GO:0005524">
    <property type="term" value="F:ATP binding"/>
    <property type="evidence" value="ECO:0007669"/>
    <property type="project" value="UniProtKB-KW"/>
</dbReference>
<dbReference type="GO" id="GO:0004143">
    <property type="term" value="F:ATP-dependent diacylglycerol kinase activity"/>
    <property type="evidence" value="ECO:0000314"/>
    <property type="project" value="UniProtKB"/>
</dbReference>
<dbReference type="GO" id="GO:0008270">
    <property type="term" value="F:zinc ion binding"/>
    <property type="evidence" value="ECO:0007669"/>
    <property type="project" value="UniProtKB-KW"/>
</dbReference>
<dbReference type="GO" id="GO:0046339">
    <property type="term" value="P:diacylglycerol metabolic process"/>
    <property type="evidence" value="ECO:0000314"/>
    <property type="project" value="UniProtKB"/>
</dbReference>
<dbReference type="GO" id="GO:0046834">
    <property type="term" value="P:lipid phosphorylation"/>
    <property type="evidence" value="ECO:0000314"/>
    <property type="project" value="UniProtKB"/>
</dbReference>
<dbReference type="GO" id="GO:0006654">
    <property type="term" value="P:phosphatidic acid biosynthetic process"/>
    <property type="evidence" value="ECO:0000314"/>
    <property type="project" value="UniProtKB"/>
</dbReference>
<dbReference type="GO" id="GO:0007200">
    <property type="term" value="P:phospholipase C-activating G protein-coupled receptor signaling pathway"/>
    <property type="evidence" value="ECO:0007669"/>
    <property type="project" value="InterPro"/>
</dbReference>
<dbReference type="CDD" id="cd20848">
    <property type="entry name" value="C1_DGKeta_rpt1"/>
    <property type="match status" value="1"/>
</dbReference>
<dbReference type="CDD" id="cd20894">
    <property type="entry name" value="C1_DGKeta_rpt2"/>
    <property type="match status" value="1"/>
</dbReference>
<dbReference type="CDD" id="cd13274">
    <property type="entry name" value="PH_DGK_type2"/>
    <property type="match status" value="1"/>
</dbReference>
<dbReference type="FunFam" id="2.30.29.30:FF:000060">
    <property type="entry name" value="Diacylglycerol kinase"/>
    <property type="match status" value="1"/>
</dbReference>
<dbReference type="FunFam" id="2.60.200.40:FF:000001">
    <property type="entry name" value="Diacylglycerol kinase"/>
    <property type="match status" value="1"/>
</dbReference>
<dbReference type="FunFam" id="3.30.60.20:FF:000002">
    <property type="entry name" value="Diacylglycerol kinase"/>
    <property type="match status" value="1"/>
</dbReference>
<dbReference type="FunFam" id="3.30.60.20:FF:000029">
    <property type="entry name" value="Diacylglycerol kinase"/>
    <property type="match status" value="1"/>
</dbReference>
<dbReference type="FunFam" id="3.40.50.10330:FF:000001">
    <property type="entry name" value="Diacylglycerol kinase"/>
    <property type="match status" value="1"/>
</dbReference>
<dbReference type="Gene3D" id="2.60.200.40">
    <property type="match status" value="1"/>
</dbReference>
<dbReference type="Gene3D" id="3.30.60.20">
    <property type="match status" value="2"/>
</dbReference>
<dbReference type="Gene3D" id="2.30.29.30">
    <property type="entry name" value="Pleckstrin-homology domain (PH domain)/Phosphotyrosine-binding domain (PTB)"/>
    <property type="match status" value="1"/>
</dbReference>
<dbReference type="Gene3D" id="3.40.50.10330">
    <property type="entry name" value="Probable inorganic polyphosphate/atp-NAD kinase, domain 1"/>
    <property type="match status" value="1"/>
</dbReference>
<dbReference type="InterPro" id="IPR017438">
    <property type="entry name" value="ATP-NAD_kinase_N"/>
</dbReference>
<dbReference type="InterPro" id="IPR046349">
    <property type="entry name" value="C1-like_sf"/>
</dbReference>
<dbReference type="InterPro" id="IPR047480">
    <property type="entry name" value="C1_DGKeta_rpt2"/>
</dbReference>
<dbReference type="InterPro" id="IPR037607">
    <property type="entry name" value="DGK"/>
</dbReference>
<dbReference type="InterPro" id="IPR054474">
    <property type="entry name" value="DGKD_4H"/>
</dbReference>
<dbReference type="InterPro" id="IPR000756">
    <property type="entry name" value="Diacylglycerol_kin_accessory"/>
</dbReference>
<dbReference type="InterPro" id="IPR001206">
    <property type="entry name" value="Diacylglycerol_kinase_cat_dom"/>
</dbReference>
<dbReference type="InterPro" id="IPR016064">
    <property type="entry name" value="NAD/diacylglycerol_kinase_sf"/>
</dbReference>
<dbReference type="InterPro" id="IPR002219">
    <property type="entry name" value="PE/DAG-bd"/>
</dbReference>
<dbReference type="InterPro" id="IPR011993">
    <property type="entry name" value="PH-like_dom_sf"/>
</dbReference>
<dbReference type="InterPro" id="IPR001849">
    <property type="entry name" value="PH_domain"/>
</dbReference>
<dbReference type="PANTHER" id="PTHR11255">
    <property type="entry name" value="DIACYLGLYCEROL KINASE"/>
    <property type="match status" value="1"/>
</dbReference>
<dbReference type="PANTHER" id="PTHR11255:SF37">
    <property type="entry name" value="DIACYLGLYCEROL KINASE ETA"/>
    <property type="match status" value="1"/>
</dbReference>
<dbReference type="Pfam" id="PF00130">
    <property type="entry name" value="C1_1"/>
    <property type="match status" value="2"/>
</dbReference>
<dbReference type="Pfam" id="PF00609">
    <property type="entry name" value="DAGK_acc"/>
    <property type="match status" value="1"/>
</dbReference>
<dbReference type="Pfam" id="PF00781">
    <property type="entry name" value="DAGK_cat"/>
    <property type="match status" value="1"/>
</dbReference>
<dbReference type="Pfam" id="PF22944">
    <property type="entry name" value="DGKD_4H"/>
    <property type="match status" value="1"/>
</dbReference>
<dbReference type="Pfam" id="PF00169">
    <property type="entry name" value="PH"/>
    <property type="match status" value="1"/>
</dbReference>
<dbReference type="SMART" id="SM00109">
    <property type="entry name" value="C1"/>
    <property type="match status" value="2"/>
</dbReference>
<dbReference type="SMART" id="SM00045">
    <property type="entry name" value="DAGKa"/>
    <property type="match status" value="1"/>
</dbReference>
<dbReference type="SMART" id="SM00046">
    <property type="entry name" value="DAGKc"/>
    <property type="match status" value="1"/>
</dbReference>
<dbReference type="SMART" id="SM00233">
    <property type="entry name" value="PH"/>
    <property type="match status" value="1"/>
</dbReference>
<dbReference type="SUPFAM" id="SSF57889">
    <property type="entry name" value="Cysteine-rich domain"/>
    <property type="match status" value="2"/>
</dbReference>
<dbReference type="SUPFAM" id="SSF111331">
    <property type="entry name" value="NAD kinase/diacylglycerol kinase-like"/>
    <property type="match status" value="1"/>
</dbReference>
<dbReference type="SUPFAM" id="SSF50729">
    <property type="entry name" value="PH domain-like"/>
    <property type="match status" value="1"/>
</dbReference>
<dbReference type="PROSITE" id="PS50146">
    <property type="entry name" value="DAGK"/>
    <property type="match status" value="1"/>
</dbReference>
<dbReference type="PROSITE" id="PS50003">
    <property type="entry name" value="PH_DOMAIN"/>
    <property type="match status" value="1"/>
</dbReference>
<dbReference type="PROSITE" id="PS00479">
    <property type="entry name" value="ZF_DAG_PE_1"/>
    <property type="match status" value="2"/>
</dbReference>
<dbReference type="PROSITE" id="PS50081">
    <property type="entry name" value="ZF_DAG_PE_2"/>
    <property type="match status" value="2"/>
</dbReference>
<feature type="chain" id="PRO_0000218463" description="Diacylglycerol kinase eta">
    <location>
        <begin position="1"/>
        <end position="1154"/>
    </location>
</feature>
<feature type="domain" description="PH" evidence="2">
    <location>
        <begin position="59"/>
        <end position="152"/>
    </location>
</feature>
<feature type="domain" description="DAGKc" evidence="4">
    <location>
        <begin position="322"/>
        <end position="457"/>
    </location>
</feature>
<feature type="zinc finger region" description="Phorbol-ester/DAG-type 1" evidence="3">
    <location>
        <begin position="169"/>
        <end position="219"/>
    </location>
</feature>
<feature type="zinc finger region" description="Phorbol-ester/DAG-type 2" evidence="3">
    <location>
        <begin position="241"/>
        <end position="292"/>
    </location>
</feature>
<feature type="region of interest" description="Disordered" evidence="5">
    <location>
        <begin position="1"/>
        <end position="54"/>
    </location>
</feature>
<feature type="region of interest" description="Disordered" evidence="5">
    <location>
        <begin position="560"/>
        <end position="608"/>
    </location>
</feature>
<feature type="region of interest" description="Disordered" evidence="5">
    <location>
        <begin position="634"/>
        <end position="678"/>
    </location>
</feature>
<feature type="region of interest" description="Disordered" evidence="5">
    <location>
        <begin position="1123"/>
        <end position="1154"/>
    </location>
</feature>
<feature type="compositionally biased region" description="Acidic residues" evidence="5">
    <location>
        <begin position="573"/>
        <end position="586"/>
    </location>
</feature>
<feature type="compositionally biased region" description="Basic and acidic residues" evidence="5">
    <location>
        <begin position="656"/>
        <end position="667"/>
    </location>
</feature>
<feature type="compositionally biased region" description="Polar residues" evidence="5">
    <location>
        <begin position="1131"/>
        <end position="1154"/>
    </location>
</feature>
<gene>
    <name type="primary">DGKH</name>
</gene>
<evidence type="ECO:0000250" key="1">
    <source>
        <dbReference type="UniProtKB" id="Q86XP1"/>
    </source>
</evidence>
<evidence type="ECO:0000255" key="2">
    <source>
        <dbReference type="PROSITE-ProRule" id="PRU00145"/>
    </source>
</evidence>
<evidence type="ECO:0000255" key="3">
    <source>
        <dbReference type="PROSITE-ProRule" id="PRU00226"/>
    </source>
</evidence>
<evidence type="ECO:0000255" key="4">
    <source>
        <dbReference type="PROSITE-ProRule" id="PRU00783"/>
    </source>
</evidence>
<evidence type="ECO:0000256" key="5">
    <source>
        <dbReference type="SAM" id="MobiDB-lite"/>
    </source>
</evidence>
<evidence type="ECO:0000269" key="6">
    <source>
    </source>
</evidence>
<evidence type="ECO:0000305" key="7"/>
<evidence type="ECO:0000305" key="8">
    <source>
    </source>
</evidence>
<keyword id="KW-0067">ATP-binding</keyword>
<keyword id="KW-1003">Cell membrane</keyword>
<keyword id="KW-0963">Cytoplasm</keyword>
<keyword id="KW-0418">Kinase</keyword>
<keyword id="KW-0443">Lipid metabolism</keyword>
<keyword id="KW-0472">Membrane</keyword>
<keyword id="KW-0479">Metal-binding</keyword>
<keyword id="KW-0547">Nucleotide-binding</keyword>
<keyword id="KW-0597">Phosphoprotein</keyword>
<keyword id="KW-1185">Reference proteome</keyword>
<keyword id="KW-0677">Repeat</keyword>
<keyword id="KW-0808">Transferase</keyword>
<keyword id="KW-0862">Zinc</keyword>
<keyword id="KW-0863">Zinc-finger</keyword>
<comment type="function">
    <text evidence="1 6 7">Diacylglycerol kinase that converts diacylglycerol/DAG into phosphatidic acid/phosphatidate/PA and regulates the respective levels of these two bioactive lipids (PubMed:8702685). Thereby, acts as a central switch between the signaling pathways activated by these second messengers with different cellular targets and opposite effects in numerous biological processes (Probable). Plays a key role in promoting cell growth (By similarity). Activates the Ras/B-Raf/C-Raf/MEK/ERK signaling pathway induced by EGF. Regulates the recruitment of RAF1 and BRAF from cytoplasm to membranes and their heterodimerization (By similarity).</text>
</comment>
<comment type="catalytic activity">
    <reaction evidence="6">
        <text>a 1,2-diacyl-sn-glycerol + ATP = a 1,2-diacyl-sn-glycero-3-phosphate + ADP + H(+)</text>
        <dbReference type="Rhea" id="RHEA:10272"/>
        <dbReference type="ChEBI" id="CHEBI:15378"/>
        <dbReference type="ChEBI" id="CHEBI:17815"/>
        <dbReference type="ChEBI" id="CHEBI:30616"/>
        <dbReference type="ChEBI" id="CHEBI:58608"/>
        <dbReference type="ChEBI" id="CHEBI:456216"/>
        <dbReference type="EC" id="2.7.1.107"/>
    </reaction>
    <physiologicalReaction direction="left-to-right" evidence="8">
        <dbReference type="Rhea" id="RHEA:10273"/>
    </physiologicalReaction>
</comment>
<comment type="catalytic activity">
    <reaction evidence="6">
        <text>1,2-di-(9Z-octadecenoyl)-sn-glycerol + ATP = 1,2-di-(9Z-octadecenoyl)-sn-glycero-3-phosphate + ADP + H(+)</text>
        <dbReference type="Rhea" id="RHEA:40327"/>
        <dbReference type="ChEBI" id="CHEBI:15378"/>
        <dbReference type="ChEBI" id="CHEBI:30616"/>
        <dbReference type="ChEBI" id="CHEBI:52333"/>
        <dbReference type="ChEBI" id="CHEBI:74546"/>
        <dbReference type="ChEBI" id="CHEBI:456216"/>
    </reaction>
    <physiologicalReaction direction="left-to-right" evidence="8">
        <dbReference type="Rhea" id="RHEA:40328"/>
    </physiologicalReaction>
</comment>
<comment type="pathway">
    <text evidence="8">Lipid metabolism; glycerolipid metabolism.</text>
</comment>
<comment type="subunit">
    <text evidence="1">Interacts with RAF1 and BRAF.</text>
</comment>
<comment type="subcellular location">
    <subcellularLocation>
        <location evidence="1">Cytoplasm</location>
    </subcellularLocation>
    <subcellularLocation>
        <location evidence="1">Cell membrane</location>
    </subcellularLocation>
    <text evidence="1">Translocated from the cytoplasm to endosomes in response to stress stimuli.</text>
</comment>
<comment type="tissue specificity">
    <text evidence="6">Expressed in a wide variety of tissues (PubMed:8702685). Most abundant in the brain and testis; also found in lung, spleen, and prostate (at protein level) (PubMed:8702685).</text>
</comment>
<comment type="induction">
    <text evidence="6">By glucocorticoids.</text>
</comment>
<comment type="PTM">
    <text evidence="1">Phosphorylated. Phosphorylation does not inhibit catalytic activity.</text>
</comment>
<comment type="similarity">
    <text evidence="7">Belongs to the eukaryotic diacylglycerol kinase family.</text>
</comment>
<organism>
    <name type="scientific">Mesocricetus auratus</name>
    <name type="common">Golden hamster</name>
    <dbReference type="NCBI Taxonomy" id="10036"/>
    <lineage>
        <taxon>Eukaryota</taxon>
        <taxon>Metazoa</taxon>
        <taxon>Chordata</taxon>
        <taxon>Craniata</taxon>
        <taxon>Vertebrata</taxon>
        <taxon>Euteleostomi</taxon>
        <taxon>Mammalia</taxon>
        <taxon>Eutheria</taxon>
        <taxon>Euarchontoglires</taxon>
        <taxon>Glires</taxon>
        <taxon>Rodentia</taxon>
        <taxon>Myomorpha</taxon>
        <taxon>Muroidea</taxon>
        <taxon>Cricetidae</taxon>
        <taxon>Cricetinae</taxon>
        <taxon>Mesocricetus</taxon>
    </lineage>
</organism>
<accession>Q64398</accession>
<name>DGKH_MESAU</name>
<proteinExistence type="evidence at protein level"/>
<sequence>MAGAGYQHHPPGGAAVGTSAVSPTAAGPGEDSSDSEAEQGGPQKLIRKVSTSGQIRTKTSIKEGQLLKQTSSFQRWKKRYFKLRGRTLYYAKDSKSLIFDEVDLSDASVAEASTKNANNSFTIITPFRRLMLCAENRKEMEDWISSLKSVQSREPYEVAQFNVEHFSGMHNWYACSHARPTFCNVCRESLSGVTSHGLSCEVCKFKAHKRCAVRATNNCKWTTLASIGKDIIEDEDGVAMPHQWLEGNLPVSAKCAVCDKTCGSVLRLQDWKCLWCKAMVHTACKDLYHPVCPLGQCKVSIIPPIALNSTDSDGFCRATFSFCVSPLLVFVNSKSGDNQGVKFLRRFKQLLNPAQVFDLMNGGPHLGLRLFQKFDNFRILVCGGDGSVGWVLSEIDKLNLNKQCQLGVLPLGTGNDLARVLGWGGSYDDDTQLPQILEKLERASTKMLDRWSIMTYELKLPAKASLLPEPPEASGGFYMTIYEDSVANHLTKILNSDEHAVVISSAKILCETVKDFVAKVEKAQDKTLENTVVAEAVANKCSVLNEKLEQLLQALHADAQASRVPPGVGPAIPEEDAVESSSEESLGESKDQLVNDIAKPSSQKAVKPREIMLRANSLKKAVRQVIEEAGKVMDEQTVQPCEPVSPSCDYDSPEADDSKDNDTKESPAAKSTSQAPEAQAIRGHFQTDSVAGSAMATTKENLPVLNTRIICPGLRAGLAASIAGSSIINKMLLANIDPFGATPFIDPDLDSLDGYSEKCVMNNYFGIGLDAKISLEFNNKREEHPEKCRSRTKNLMWYGVLGTRELLQRSYKNLEQRVQLECDGQYIPLPSLQGIAVLNIPSYAGGTNFWGGTKEDDIFAAPSFDDKILEVVAVFDSVQMAVSRVIKLQHHRIAQCRTVKITIFGDEGVPVQVDGEAWVQPPGIIKIVHKNRAQMLTRDRAFESTLKSWEDKQKCDSGKPVLRTNLYIHPAADLATEEVSQMRLCSQAAEELITRICDAATIHCLLGAGTGSSVNACSHALNKANPRFPESLTRDTATEIAINVKALYNETESLLVGRVPLQLESPHEERVSSALHSVEVELQKLTEIPWLYYILRPNEDEEPPMDCTKRNSKSTVFRIVPKFKMEKAQKQKTSSQPGPGDTESGSYEANSPGN</sequence>
<reference key="1">
    <citation type="journal article" date="1996" name="J. Biol. Chem.">
        <title>Cloning and characterization of a glucocorticoid-induced diacylglycerol kinase.</title>
        <authorList>
            <person name="Klauck T.M."/>
            <person name="Xu X."/>
            <person name="Mousseau B."/>
            <person name="Jaken S."/>
        </authorList>
    </citation>
    <scope>NUCLEOTIDE SEQUENCE [MRNA]</scope>
    <scope>FUNCTION</scope>
    <scope>CATALYTIC ACTIVITY</scope>
    <scope>PATHWAY</scope>
    <scope>INDUCTION</scope>
    <scope>TISSUE SPECIFICITY</scope>
    <source>
        <tissue>Smooth muscle</tissue>
    </source>
</reference>
<protein>
    <recommendedName>
        <fullName evidence="7">Diacylglycerol kinase eta</fullName>
        <shortName>DAG kinase eta</shortName>
        <ecNumber evidence="6">2.7.1.107</ecNumber>
    </recommendedName>
    <alternativeName>
        <fullName>130 kDa diacylglycerol kinase</fullName>
    </alternativeName>
    <alternativeName>
        <fullName>Diglyceride kinase eta</fullName>
        <shortName>DGK-eta</shortName>
    </alternativeName>
</protein>